<feature type="chain" id="PRO_0000162294" description="Dihydrolipoyllysine-residue acetyltransferase component of pyruvate dehydrogenase complex">
    <location>
        <begin position="1"/>
        <end position="433"/>
    </location>
</feature>
<feature type="domain" description="Lipoyl-binding" evidence="3">
    <location>
        <begin position="2"/>
        <end position="77"/>
    </location>
</feature>
<feature type="domain" description="Peripheral subunit-binding (PSBD)" evidence="4">
    <location>
        <begin position="128"/>
        <end position="165"/>
    </location>
</feature>
<feature type="region of interest" description="Disordered" evidence="5">
    <location>
        <begin position="80"/>
        <end position="134"/>
    </location>
</feature>
<feature type="region of interest" description="Disordered" evidence="5">
    <location>
        <begin position="164"/>
        <end position="204"/>
    </location>
</feature>
<feature type="compositionally biased region" description="Basic and acidic residues" evidence="5">
    <location>
        <begin position="84"/>
        <end position="103"/>
    </location>
</feature>
<feature type="compositionally biased region" description="Basic and acidic residues" evidence="5">
    <location>
        <begin position="117"/>
        <end position="126"/>
    </location>
</feature>
<feature type="compositionally biased region" description="Low complexity" evidence="5">
    <location>
        <begin position="166"/>
        <end position="188"/>
    </location>
</feature>
<feature type="active site" evidence="2">
    <location>
        <position position="404"/>
    </location>
</feature>
<feature type="modified residue" description="N6-lipoyllysine" evidence="1 3">
    <location>
        <position position="43"/>
    </location>
</feature>
<name>ODP2_STAES</name>
<comment type="function">
    <text>The pyruvate dehydrogenase complex catalyzes the overall conversion of pyruvate to acetyl-CoA and CO(2). It contains multiple copies of three enzymatic components: pyruvate dehydrogenase (E1), dihydrolipoamide acetyltransferase (E2) and lipoamide dehydrogenase (E3).</text>
</comment>
<comment type="catalytic activity">
    <reaction>
        <text>N(6)-[(R)-dihydrolipoyl]-L-lysyl-[protein] + acetyl-CoA = N(6)-[(R)-S(8)-acetyldihydrolipoyl]-L-lysyl-[protein] + CoA</text>
        <dbReference type="Rhea" id="RHEA:17017"/>
        <dbReference type="Rhea" id="RHEA-COMP:10475"/>
        <dbReference type="Rhea" id="RHEA-COMP:10478"/>
        <dbReference type="ChEBI" id="CHEBI:57287"/>
        <dbReference type="ChEBI" id="CHEBI:57288"/>
        <dbReference type="ChEBI" id="CHEBI:83100"/>
        <dbReference type="ChEBI" id="CHEBI:83111"/>
        <dbReference type="EC" id="2.3.1.12"/>
    </reaction>
</comment>
<comment type="cofactor">
    <cofactor evidence="1">
        <name>(R)-lipoate</name>
        <dbReference type="ChEBI" id="CHEBI:83088"/>
    </cofactor>
    <text evidence="1">Binds 1 lipoyl cofactor covalently.</text>
</comment>
<comment type="subunit">
    <text evidence="1">Forms a 24-polypeptide structural core with octahedral symmetry.</text>
</comment>
<comment type="similarity">
    <text evidence="6">Belongs to the 2-oxoacid dehydrogenase family.</text>
</comment>
<evidence type="ECO:0000250" key="1"/>
<evidence type="ECO:0000255" key="2"/>
<evidence type="ECO:0000255" key="3">
    <source>
        <dbReference type="PROSITE-ProRule" id="PRU01066"/>
    </source>
</evidence>
<evidence type="ECO:0000255" key="4">
    <source>
        <dbReference type="PROSITE-ProRule" id="PRU01170"/>
    </source>
</evidence>
<evidence type="ECO:0000256" key="5">
    <source>
        <dbReference type="SAM" id="MobiDB-lite"/>
    </source>
</evidence>
<evidence type="ECO:0000305" key="6"/>
<keyword id="KW-0012">Acyltransferase</keyword>
<keyword id="KW-0450">Lipoyl</keyword>
<keyword id="KW-0808">Transferase</keyword>
<organism>
    <name type="scientific">Staphylococcus epidermidis (strain ATCC 12228 / FDA PCI 1200)</name>
    <dbReference type="NCBI Taxonomy" id="176280"/>
    <lineage>
        <taxon>Bacteria</taxon>
        <taxon>Bacillati</taxon>
        <taxon>Bacillota</taxon>
        <taxon>Bacilli</taxon>
        <taxon>Bacillales</taxon>
        <taxon>Staphylococcaceae</taxon>
        <taxon>Staphylococcus</taxon>
    </lineage>
</organism>
<gene>
    <name type="primary">pdhC</name>
    <name type="ordered locus">SE_0793</name>
</gene>
<sequence length="433" mass="46991">MAFEFRLPDIGEGIHEGEIVKWFIKAGDTIEEDDVLAEVQNDKSVVEIPSPVSGTVEEVLVDEGTVAVVGDVIVKIDAPDAEEMQFKGHGDDEDSKKEEKEQESPVQEEASSTQSQEKTEVDESKTVKAMPSVRKYARENGVNIKAVNGSGKNGRITKEDIDAYLNGGSSEEGSNTSVASESTSSDVVNASATQALPEGDFPETTEKIPAMRKAIAKAMVNSKHTAPHVTLMDEIDVQELWDHRKKFKEIAAEQGTKLTFLPYVVKALVSALKKYPALNTSFNEEAGEVVHKHYWNIGIAADTDKGLLVPVVKHADRKSIFEISDEINELAVKARDGKLTSEEMKGATCTISNIGSAGGQWFTPVINHPEVAILGIGRIAQKPIVKDGEIVAAPVLALSLSFDHRQIDGATGQNAMNHIKRLLNNPELLLMEG</sequence>
<accession>Q8CT13</accession>
<dbReference type="EC" id="2.3.1.12"/>
<dbReference type="EMBL" id="AE015929">
    <property type="protein sequence ID" value="AAO04390.1"/>
    <property type="molecule type" value="Genomic_DNA"/>
</dbReference>
<dbReference type="RefSeq" id="NP_764348.1">
    <property type="nucleotide sequence ID" value="NC_004461.1"/>
</dbReference>
<dbReference type="RefSeq" id="WP_002467591.1">
    <property type="nucleotide sequence ID" value="NZ_WBME01000031.1"/>
</dbReference>
<dbReference type="SMR" id="Q8CT13"/>
<dbReference type="KEGG" id="sep:SE_0793"/>
<dbReference type="PATRIC" id="fig|176280.10.peg.766"/>
<dbReference type="eggNOG" id="COG0508">
    <property type="taxonomic scope" value="Bacteria"/>
</dbReference>
<dbReference type="HOGENOM" id="CLU_016733_10_0_9"/>
<dbReference type="OrthoDB" id="9805770at2"/>
<dbReference type="Proteomes" id="UP000001411">
    <property type="component" value="Chromosome"/>
</dbReference>
<dbReference type="GO" id="GO:0005737">
    <property type="term" value="C:cytoplasm"/>
    <property type="evidence" value="ECO:0007669"/>
    <property type="project" value="TreeGrafter"/>
</dbReference>
<dbReference type="GO" id="GO:0004742">
    <property type="term" value="F:dihydrolipoyllysine-residue acetyltransferase activity"/>
    <property type="evidence" value="ECO:0007669"/>
    <property type="project" value="UniProtKB-EC"/>
</dbReference>
<dbReference type="GO" id="GO:0031405">
    <property type="term" value="F:lipoic acid binding"/>
    <property type="evidence" value="ECO:0007669"/>
    <property type="project" value="TreeGrafter"/>
</dbReference>
<dbReference type="CDD" id="cd06849">
    <property type="entry name" value="lipoyl_domain"/>
    <property type="match status" value="1"/>
</dbReference>
<dbReference type="FunFam" id="3.30.559.10:FF:000007">
    <property type="entry name" value="Dihydrolipoamide acetyltransferase component of pyruvate dehydrogenase complex"/>
    <property type="match status" value="1"/>
</dbReference>
<dbReference type="FunFam" id="4.10.320.10:FF:000011">
    <property type="entry name" value="Dihydrolipoamide acetyltransferase component of pyruvate dehydrogenase complex"/>
    <property type="match status" value="1"/>
</dbReference>
<dbReference type="Gene3D" id="2.40.50.100">
    <property type="match status" value="1"/>
</dbReference>
<dbReference type="Gene3D" id="3.30.559.10">
    <property type="entry name" value="Chloramphenicol acetyltransferase-like domain"/>
    <property type="match status" value="1"/>
</dbReference>
<dbReference type="Gene3D" id="4.10.320.10">
    <property type="entry name" value="E3-binding domain"/>
    <property type="match status" value="1"/>
</dbReference>
<dbReference type="InterPro" id="IPR003016">
    <property type="entry name" value="2-oxoA_DH_lipoyl-BS"/>
</dbReference>
<dbReference type="InterPro" id="IPR001078">
    <property type="entry name" value="2-oxoacid_DH_actylTfrase"/>
</dbReference>
<dbReference type="InterPro" id="IPR050743">
    <property type="entry name" value="2-oxoacid_DH_E2_comp"/>
</dbReference>
<dbReference type="InterPro" id="IPR000089">
    <property type="entry name" value="Biotin_lipoyl"/>
</dbReference>
<dbReference type="InterPro" id="IPR023213">
    <property type="entry name" value="CAT-like_dom_sf"/>
</dbReference>
<dbReference type="InterPro" id="IPR036625">
    <property type="entry name" value="E3-bd_dom_sf"/>
</dbReference>
<dbReference type="InterPro" id="IPR004167">
    <property type="entry name" value="PSBD"/>
</dbReference>
<dbReference type="InterPro" id="IPR011053">
    <property type="entry name" value="Single_hybrid_motif"/>
</dbReference>
<dbReference type="PANTHER" id="PTHR43178">
    <property type="entry name" value="DIHYDROLIPOAMIDE ACETYLTRANSFERASE COMPONENT OF PYRUVATE DEHYDROGENASE COMPLEX"/>
    <property type="match status" value="1"/>
</dbReference>
<dbReference type="PANTHER" id="PTHR43178:SF5">
    <property type="entry name" value="LIPOAMIDE ACYLTRANSFERASE COMPONENT OF BRANCHED-CHAIN ALPHA-KETO ACID DEHYDROGENASE COMPLEX, MITOCHONDRIAL"/>
    <property type="match status" value="1"/>
</dbReference>
<dbReference type="Pfam" id="PF00198">
    <property type="entry name" value="2-oxoacid_dh"/>
    <property type="match status" value="1"/>
</dbReference>
<dbReference type="Pfam" id="PF00364">
    <property type="entry name" value="Biotin_lipoyl"/>
    <property type="match status" value="1"/>
</dbReference>
<dbReference type="Pfam" id="PF02817">
    <property type="entry name" value="E3_binding"/>
    <property type="match status" value="1"/>
</dbReference>
<dbReference type="SUPFAM" id="SSF52777">
    <property type="entry name" value="CoA-dependent acyltransferases"/>
    <property type="match status" value="1"/>
</dbReference>
<dbReference type="SUPFAM" id="SSF47005">
    <property type="entry name" value="Peripheral subunit-binding domain of 2-oxo acid dehydrogenase complex"/>
    <property type="match status" value="1"/>
</dbReference>
<dbReference type="SUPFAM" id="SSF51230">
    <property type="entry name" value="Single hybrid motif"/>
    <property type="match status" value="1"/>
</dbReference>
<dbReference type="PROSITE" id="PS50968">
    <property type="entry name" value="BIOTINYL_LIPOYL"/>
    <property type="match status" value="1"/>
</dbReference>
<dbReference type="PROSITE" id="PS00189">
    <property type="entry name" value="LIPOYL"/>
    <property type="match status" value="1"/>
</dbReference>
<dbReference type="PROSITE" id="PS51826">
    <property type="entry name" value="PSBD"/>
    <property type="match status" value="1"/>
</dbReference>
<reference key="1">
    <citation type="journal article" date="2003" name="Mol. Microbiol.">
        <title>Genome-based analysis of virulence genes in a non-biofilm-forming Staphylococcus epidermidis strain (ATCC 12228).</title>
        <authorList>
            <person name="Zhang Y.-Q."/>
            <person name="Ren S.-X."/>
            <person name="Li H.-L."/>
            <person name="Wang Y.-X."/>
            <person name="Fu G."/>
            <person name="Yang J."/>
            <person name="Qin Z.-Q."/>
            <person name="Miao Y.-G."/>
            <person name="Wang W.-Y."/>
            <person name="Chen R.-S."/>
            <person name="Shen Y."/>
            <person name="Chen Z."/>
            <person name="Yuan Z.-H."/>
            <person name="Zhao G.-P."/>
            <person name="Qu D."/>
            <person name="Danchin A."/>
            <person name="Wen Y.-M."/>
        </authorList>
    </citation>
    <scope>NUCLEOTIDE SEQUENCE [LARGE SCALE GENOMIC DNA]</scope>
    <source>
        <strain>ATCC 12228 / FDA PCI 1200</strain>
    </source>
</reference>
<proteinExistence type="inferred from homology"/>
<protein>
    <recommendedName>
        <fullName>Dihydrolipoyllysine-residue acetyltransferase component of pyruvate dehydrogenase complex</fullName>
        <ecNumber>2.3.1.12</ecNumber>
    </recommendedName>
    <alternativeName>
        <fullName>Dihydrolipoamide acetyltransferase component of pyruvate dehydrogenase complex</fullName>
    </alternativeName>
    <alternativeName>
        <fullName>E2</fullName>
    </alternativeName>
</protein>